<keyword id="KW-0963">Cytoplasm</keyword>
<keyword id="KW-0251">Elongation factor</keyword>
<keyword id="KW-0342">GTP-binding</keyword>
<keyword id="KW-0378">Hydrolase</keyword>
<keyword id="KW-0488">Methylation</keyword>
<keyword id="KW-0547">Nucleotide-binding</keyword>
<keyword id="KW-0597">Phosphoprotein</keyword>
<keyword id="KW-0648">Protein biosynthesis</keyword>
<keyword id="KW-1185">Reference proteome</keyword>
<accession>Q90835</accession>
<reference key="1">
    <citation type="journal article" date="1994" name="Gene">
        <title>Cloning and characterization of a cDNA encoding elongation factor 1 alpha from chicken cells devoid of mitochondrial DNA.</title>
        <authorList>
            <person name="Wang H."/>
            <person name="Parent M."/>
            <person name="Morais R."/>
        </authorList>
    </citation>
    <scope>NUCLEOTIDE SEQUENCE [MRNA]</scope>
    <source>
        <strain>White leghorn</strain>
        <tissue>Liver</tissue>
    </source>
</reference>
<sequence>MGKEKTHINIVVIGHVDSGKSTTTGHLIYKCGGIDKRTIEKFEKEAAEMGKGSFKYAWVLDKLKAERERGITIDISLWKFETSKYYVTIIDAPGHRDFIKNMITGTSQADCAVLIVAAGVGEFEAGISKNGQTREHALLAYTLGVKQLIVGVNKMDSTEPPYSQKRYEEIVKEVSTYIKKIGYNPDTVAFVPISGWNGDNMLEPSSNMPWFKGWKVTRKDGNASGTTLLEALDCILPPTRPTDKPLRLPLQDVYKIGGIGTVPVGRVETGVLKPGMVVTFAPVNVTTEVKSVEMHHEALSEALPGDNVGFNVKNVSVKDVRRGNVAGDSKNDPPMEAAGFTAQVIILNHPGQISAGYAPVLDCHTAHIACKFAELKEKIDRRSGKKLEDGPKFLKSGDAAIVDMIPGKPMCVESFSDYPPLGRFAVRDMRQTVAVGVIKAVDKKAGGAGKVTKSAQKAQKAK</sequence>
<comment type="function">
    <text evidence="1">Translation elongation factor that catalyzes the GTP-dependent binding of aminoacyl-tRNA (aa-tRNA) to the A-site of ribosomes during the elongation phase of protein synthesis. Base pairing between the mRNA codon and the aa-tRNA anticodon promotes GTP hydrolysis, releasing the aa-tRNA from EEF1A1 and allowing its accommodation into the ribosome. The growing protein chain is subsequently transferred from the P-site peptidyl tRNA to the A-site aa-tRNA, extending it by one amino acid through ribosome-catalyzed peptide bond formation.</text>
</comment>
<comment type="catalytic activity">
    <reaction evidence="1">
        <text>GTP + H2O = GDP + phosphate + H(+)</text>
        <dbReference type="Rhea" id="RHEA:19669"/>
        <dbReference type="ChEBI" id="CHEBI:15377"/>
        <dbReference type="ChEBI" id="CHEBI:15378"/>
        <dbReference type="ChEBI" id="CHEBI:37565"/>
        <dbReference type="ChEBI" id="CHEBI:43474"/>
        <dbReference type="ChEBI" id="CHEBI:58189"/>
    </reaction>
    <physiologicalReaction direction="left-to-right" evidence="1">
        <dbReference type="Rhea" id="RHEA:19670"/>
    </physiologicalReaction>
</comment>
<comment type="subcellular location">
    <subcellularLocation>
        <location>Cytoplasm</location>
    </subcellularLocation>
</comment>
<comment type="similarity">
    <text evidence="4">Belongs to the TRAFAC class translation factor GTPase superfamily. Classic translation factor GTPase family. EF-Tu/EF-1A subfamily.</text>
</comment>
<gene>
    <name type="primary">EEF1A</name>
</gene>
<name>EF1A_CHICK</name>
<dbReference type="EC" id="3.6.5.-" evidence="1"/>
<dbReference type="EMBL" id="L00677">
    <property type="protein sequence ID" value="AAA48757.1"/>
    <property type="molecule type" value="mRNA"/>
</dbReference>
<dbReference type="PIR" id="I50226">
    <property type="entry name" value="I50226"/>
</dbReference>
<dbReference type="RefSeq" id="NP_001308445.1">
    <property type="nucleotide sequence ID" value="NM_001321516.1"/>
</dbReference>
<dbReference type="SMR" id="Q90835"/>
<dbReference type="FunCoup" id="Q90835">
    <property type="interactions" value="2037"/>
</dbReference>
<dbReference type="IntAct" id="Q90835">
    <property type="interactions" value="1"/>
</dbReference>
<dbReference type="STRING" id="9031.ENSGALP00000061496"/>
<dbReference type="PaxDb" id="9031-ENSGALP00000025606"/>
<dbReference type="Ensembl" id="ENSGALT00010003523.1">
    <property type="protein sequence ID" value="ENSGALP00010001965.1"/>
    <property type="gene ID" value="ENSGALG00010001525.1"/>
</dbReference>
<dbReference type="GeneID" id="373963"/>
<dbReference type="KEGG" id="gga:373963"/>
<dbReference type="CTD" id="1915"/>
<dbReference type="VEuPathDB" id="HostDB:geneid_373963"/>
<dbReference type="eggNOG" id="KOG0052">
    <property type="taxonomic scope" value="Eukaryota"/>
</dbReference>
<dbReference type="GeneTree" id="ENSGT00950000183029"/>
<dbReference type="HOGENOM" id="CLU_007265_3_5_1"/>
<dbReference type="InParanoid" id="Q90835"/>
<dbReference type="OMA" id="SPPCYTP"/>
<dbReference type="OrthoDB" id="342024at2759"/>
<dbReference type="PhylomeDB" id="Q90835"/>
<dbReference type="TreeFam" id="TF300304"/>
<dbReference type="Reactome" id="R-GGA-3371511">
    <property type="pathway name" value="HSF1 activation"/>
</dbReference>
<dbReference type="Reactome" id="R-GGA-6798695">
    <property type="pathway name" value="Neutrophil degranulation"/>
</dbReference>
<dbReference type="Reactome" id="R-GGA-8876725">
    <property type="pathway name" value="Protein methylation"/>
</dbReference>
<dbReference type="PRO" id="PR:Q90835"/>
<dbReference type="Proteomes" id="UP000000539">
    <property type="component" value="Chromosome 3"/>
</dbReference>
<dbReference type="Bgee" id="ENSGALG00000015917">
    <property type="expression patterns" value="Expressed in spleen and 13 other cell types or tissues"/>
</dbReference>
<dbReference type="GO" id="GO:0030864">
    <property type="term" value="C:cortical actin cytoskeleton"/>
    <property type="evidence" value="ECO:0007669"/>
    <property type="project" value="Ensembl"/>
</dbReference>
<dbReference type="GO" id="GO:0022626">
    <property type="term" value="C:cytosolic ribosome"/>
    <property type="evidence" value="ECO:0007669"/>
    <property type="project" value="Ensembl"/>
</dbReference>
<dbReference type="GO" id="GO:0005730">
    <property type="term" value="C:nucleolus"/>
    <property type="evidence" value="ECO:0007669"/>
    <property type="project" value="Ensembl"/>
</dbReference>
<dbReference type="GO" id="GO:0032587">
    <property type="term" value="C:ruffle membrane"/>
    <property type="evidence" value="ECO:0007669"/>
    <property type="project" value="Ensembl"/>
</dbReference>
<dbReference type="GO" id="GO:0005516">
    <property type="term" value="F:calmodulin binding"/>
    <property type="evidence" value="ECO:0007669"/>
    <property type="project" value="Ensembl"/>
</dbReference>
<dbReference type="GO" id="GO:0005525">
    <property type="term" value="F:GTP binding"/>
    <property type="evidence" value="ECO:0007669"/>
    <property type="project" value="UniProtKB-KW"/>
</dbReference>
<dbReference type="GO" id="GO:0003924">
    <property type="term" value="F:GTPase activity"/>
    <property type="evidence" value="ECO:0000250"/>
    <property type="project" value="UniProtKB"/>
</dbReference>
<dbReference type="GO" id="GO:0019209">
    <property type="term" value="F:kinase activator activity"/>
    <property type="evidence" value="ECO:0007669"/>
    <property type="project" value="Ensembl"/>
</dbReference>
<dbReference type="GO" id="GO:0060090">
    <property type="term" value="F:molecular adaptor activity"/>
    <property type="evidence" value="ECO:0007669"/>
    <property type="project" value="Ensembl"/>
</dbReference>
<dbReference type="GO" id="GO:0019901">
    <property type="term" value="F:protein kinase binding"/>
    <property type="evidence" value="ECO:0007669"/>
    <property type="project" value="Ensembl"/>
</dbReference>
<dbReference type="GO" id="GO:0003746">
    <property type="term" value="F:translation elongation factor activity"/>
    <property type="evidence" value="ECO:0000250"/>
    <property type="project" value="UniProtKB"/>
</dbReference>
<dbReference type="GO" id="GO:0000049">
    <property type="term" value="F:tRNA binding"/>
    <property type="evidence" value="ECO:0007669"/>
    <property type="project" value="Ensembl"/>
</dbReference>
<dbReference type="GO" id="GO:0071364">
    <property type="term" value="P:cellular response to epidermal growth factor stimulus"/>
    <property type="evidence" value="ECO:0007669"/>
    <property type="project" value="Ensembl"/>
</dbReference>
<dbReference type="GO" id="GO:0044829">
    <property type="term" value="P:positive regulation by host of viral genome replication"/>
    <property type="evidence" value="ECO:0007669"/>
    <property type="project" value="Ensembl"/>
</dbReference>
<dbReference type="GO" id="GO:0006412">
    <property type="term" value="P:translation"/>
    <property type="evidence" value="ECO:0000318"/>
    <property type="project" value="GO_Central"/>
</dbReference>
<dbReference type="GO" id="GO:0006414">
    <property type="term" value="P:translational elongation"/>
    <property type="evidence" value="ECO:0000250"/>
    <property type="project" value="UniProtKB"/>
</dbReference>
<dbReference type="CDD" id="cd01883">
    <property type="entry name" value="EF1_alpha"/>
    <property type="match status" value="1"/>
</dbReference>
<dbReference type="CDD" id="cd03693">
    <property type="entry name" value="EF1_alpha_II"/>
    <property type="match status" value="1"/>
</dbReference>
<dbReference type="CDD" id="cd03705">
    <property type="entry name" value="EF1_alpha_III"/>
    <property type="match status" value="1"/>
</dbReference>
<dbReference type="FunFam" id="2.40.30.10:FF:000005">
    <property type="entry name" value="Elongation factor 1-alpha"/>
    <property type="match status" value="1"/>
</dbReference>
<dbReference type="FunFam" id="3.40.50.300:FF:000090">
    <property type="entry name" value="Elongation factor 1-alpha"/>
    <property type="match status" value="1"/>
</dbReference>
<dbReference type="FunFam" id="2.40.30.10:FF:000168">
    <property type="entry name" value="Elongation factor 1-alpha 2"/>
    <property type="match status" value="1"/>
</dbReference>
<dbReference type="Gene3D" id="3.40.50.300">
    <property type="entry name" value="P-loop containing nucleotide triphosphate hydrolases"/>
    <property type="match status" value="1"/>
</dbReference>
<dbReference type="Gene3D" id="2.40.30.10">
    <property type="entry name" value="Translation factors"/>
    <property type="match status" value="2"/>
</dbReference>
<dbReference type="HAMAP" id="MF_00118_A">
    <property type="entry name" value="EF_Tu_A"/>
    <property type="match status" value="1"/>
</dbReference>
<dbReference type="InterPro" id="IPR004161">
    <property type="entry name" value="EFTu-like_2"/>
</dbReference>
<dbReference type="InterPro" id="IPR031157">
    <property type="entry name" value="G_TR_CS"/>
</dbReference>
<dbReference type="InterPro" id="IPR054696">
    <property type="entry name" value="GTP-eEF1A_C"/>
</dbReference>
<dbReference type="InterPro" id="IPR027417">
    <property type="entry name" value="P-loop_NTPase"/>
</dbReference>
<dbReference type="InterPro" id="IPR000795">
    <property type="entry name" value="T_Tr_GTP-bd_dom"/>
</dbReference>
<dbReference type="InterPro" id="IPR050100">
    <property type="entry name" value="TRAFAC_GTPase_members"/>
</dbReference>
<dbReference type="InterPro" id="IPR009000">
    <property type="entry name" value="Transl_B-barrel_sf"/>
</dbReference>
<dbReference type="InterPro" id="IPR009001">
    <property type="entry name" value="Transl_elong_EF1A/Init_IF2_C"/>
</dbReference>
<dbReference type="InterPro" id="IPR004539">
    <property type="entry name" value="Transl_elong_EF1A_euk/arc"/>
</dbReference>
<dbReference type="NCBIfam" id="TIGR00483">
    <property type="entry name" value="EF-1_alpha"/>
    <property type="match status" value="1"/>
</dbReference>
<dbReference type="NCBIfam" id="NF008969">
    <property type="entry name" value="PRK12317.1"/>
    <property type="match status" value="1"/>
</dbReference>
<dbReference type="PANTHER" id="PTHR23115">
    <property type="entry name" value="TRANSLATION FACTOR"/>
    <property type="match status" value="1"/>
</dbReference>
<dbReference type="Pfam" id="PF22594">
    <property type="entry name" value="GTP-eEF1A_C"/>
    <property type="match status" value="1"/>
</dbReference>
<dbReference type="Pfam" id="PF00009">
    <property type="entry name" value="GTP_EFTU"/>
    <property type="match status" value="1"/>
</dbReference>
<dbReference type="Pfam" id="PF03144">
    <property type="entry name" value="GTP_EFTU_D2"/>
    <property type="match status" value="1"/>
</dbReference>
<dbReference type="PRINTS" id="PR00315">
    <property type="entry name" value="ELONGATNFCT"/>
</dbReference>
<dbReference type="SUPFAM" id="SSF50465">
    <property type="entry name" value="EF-Tu/eEF-1alpha/eIF2-gamma C-terminal domain"/>
    <property type="match status" value="1"/>
</dbReference>
<dbReference type="SUPFAM" id="SSF52540">
    <property type="entry name" value="P-loop containing nucleoside triphosphate hydrolases"/>
    <property type="match status" value="1"/>
</dbReference>
<dbReference type="SUPFAM" id="SSF50447">
    <property type="entry name" value="Translation proteins"/>
    <property type="match status" value="1"/>
</dbReference>
<dbReference type="PROSITE" id="PS00301">
    <property type="entry name" value="G_TR_1"/>
    <property type="match status" value="1"/>
</dbReference>
<dbReference type="PROSITE" id="PS51722">
    <property type="entry name" value="G_TR_2"/>
    <property type="match status" value="1"/>
</dbReference>
<protein>
    <recommendedName>
        <fullName>Elongation factor 1-alpha 1</fullName>
        <shortName>EF-1-alpha-1</shortName>
        <ecNumber evidence="1">3.6.5.-</ecNumber>
    </recommendedName>
    <alternativeName>
        <fullName>Elongation factor Tu</fullName>
        <shortName>EF-Tu</shortName>
    </alternativeName>
</protein>
<evidence type="ECO:0000250" key="1">
    <source>
        <dbReference type="UniProtKB" id="P68104"/>
    </source>
</evidence>
<evidence type="ECO:0000250" key="2">
    <source>
        <dbReference type="UniProtKB" id="P68105"/>
    </source>
</evidence>
<evidence type="ECO:0000255" key="3"/>
<evidence type="ECO:0000305" key="4"/>
<proteinExistence type="evidence at transcript level"/>
<feature type="initiator methionine" description="Removed" evidence="1">
    <location>
        <position position="1"/>
    </location>
</feature>
<feature type="chain" id="PRO_0000090895" description="Elongation factor 1-alpha 1">
    <location>
        <begin position="2"/>
        <end position="462"/>
    </location>
</feature>
<feature type="domain" description="tr-type G">
    <location>
        <begin position="5"/>
        <end position="242"/>
    </location>
</feature>
<feature type="region of interest" description="G1" evidence="3">
    <location>
        <begin position="14"/>
        <end position="21"/>
    </location>
</feature>
<feature type="region of interest" description="G2" evidence="3">
    <location>
        <begin position="70"/>
        <end position="74"/>
    </location>
</feature>
<feature type="region of interest" description="G3" evidence="3">
    <location>
        <begin position="91"/>
        <end position="94"/>
    </location>
</feature>
<feature type="region of interest" description="G4" evidence="3">
    <location>
        <begin position="153"/>
        <end position="156"/>
    </location>
</feature>
<feature type="region of interest" description="G5" evidence="3">
    <location>
        <begin position="194"/>
        <end position="196"/>
    </location>
</feature>
<feature type="binding site" evidence="2">
    <location>
        <begin position="14"/>
        <end position="21"/>
    </location>
    <ligand>
        <name>GTP</name>
        <dbReference type="ChEBI" id="CHEBI:37565"/>
    </ligand>
</feature>
<feature type="binding site" evidence="2">
    <location>
        <begin position="153"/>
        <end position="156"/>
    </location>
    <ligand>
        <name>GTP</name>
        <dbReference type="ChEBI" id="CHEBI:37565"/>
    </ligand>
</feature>
<feature type="binding site" evidence="2">
    <location>
        <begin position="194"/>
        <end position="196"/>
    </location>
    <ligand>
        <name>GTP</name>
        <dbReference type="ChEBI" id="CHEBI:37565"/>
    </ligand>
</feature>
<feature type="modified residue" description="N,N,N-trimethylglycine" evidence="1">
    <location>
        <position position="2"/>
    </location>
</feature>
<feature type="modified residue" description="5-glutamyl glycerylphosphorylethanolamine" evidence="1">
    <location>
        <position position="301"/>
    </location>
</feature>
<feature type="modified residue" description="5-glutamyl glycerylphosphorylethanolamine" evidence="1">
    <location>
        <position position="374"/>
    </location>
</feature>
<organism>
    <name type="scientific">Gallus gallus</name>
    <name type="common">Chicken</name>
    <dbReference type="NCBI Taxonomy" id="9031"/>
    <lineage>
        <taxon>Eukaryota</taxon>
        <taxon>Metazoa</taxon>
        <taxon>Chordata</taxon>
        <taxon>Craniata</taxon>
        <taxon>Vertebrata</taxon>
        <taxon>Euteleostomi</taxon>
        <taxon>Archelosauria</taxon>
        <taxon>Archosauria</taxon>
        <taxon>Dinosauria</taxon>
        <taxon>Saurischia</taxon>
        <taxon>Theropoda</taxon>
        <taxon>Coelurosauria</taxon>
        <taxon>Aves</taxon>
        <taxon>Neognathae</taxon>
        <taxon>Galloanserae</taxon>
        <taxon>Galliformes</taxon>
        <taxon>Phasianidae</taxon>
        <taxon>Phasianinae</taxon>
        <taxon>Gallus</taxon>
    </lineage>
</organism>